<dbReference type="EMBL" id="X99572">
    <property type="protein sequence ID" value="CAA67892.1"/>
    <property type="molecule type" value="mRNA"/>
</dbReference>
<dbReference type="EMBL" id="D89628">
    <property type="protein sequence ID" value="BAA14002.1"/>
    <property type="molecule type" value="mRNA"/>
</dbReference>
<dbReference type="EMBL" id="AL732475">
    <property type="status" value="NOT_ANNOTATED_CDS"/>
    <property type="molecule type" value="Genomic_DNA"/>
</dbReference>
<dbReference type="EMBL" id="BC080770">
    <property type="protein sequence ID" value="AAH80770.1"/>
    <property type="molecule type" value="mRNA"/>
</dbReference>
<dbReference type="CCDS" id="CCDS30521.1"/>
<dbReference type="RefSeq" id="NP_001295418.1">
    <property type="nucleotide sequence ID" value="NM_001308489.1"/>
</dbReference>
<dbReference type="RefSeq" id="NP_034346.1">
    <property type="nucleotide sequence ID" value="NM_010216.3"/>
</dbReference>
<dbReference type="RefSeq" id="XP_006528763.1">
    <property type="nucleotide sequence ID" value="XM_006528700.3"/>
</dbReference>
<dbReference type="SMR" id="P97946"/>
<dbReference type="BioGRID" id="199673">
    <property type="interactions" value="3"/>
</dbReference>
<dbReference type="FunCoup" id="P97946">
    <property type="interactions" value="1377"/>
</dbReference>
<dbReference type="STRING" id="10090.ENSMUSP00000033751"/>
<dbReference type="GlyCosmos" id="P97946">
    <property type="glycosylation" value="3 sites, No reported glycans"/>
</dbReference>
<dbReference type="GlyGen" id="P97946">
    <property type="glycosylation" value="3 sites"/>
</dbReference>
<dbReference type="iPTMnet" id="P97946"/>
<dbReference type="PhosphoSitePlus" id="P97946"/>
<dbReference type="PaxDb" id="10090-ENSMUSP00000033751"/>
<dbReference type="PeptideAtlas" id="P97946"/>
<dbReference type="ProteomicsDB" id="298278"/>
<dbReference type="Pumba" id="P97946"/>
<dbReference type="Antibodypedia" id="8816">
    <property type="antibodies" value="672 antibodies from 39 providers"/>
</dbReference>
<dbReference type="DNASU" id="14205"/>
<dbReference type="Ensembl" id="ENSMUST00000033751.8">
    <property type="protein sequence ID" value="ENSMUSP00000033751.8"/>
    <property type="gene ID" value="ENSMUSG00000031380.11"/>
</dbReference>
<dbReference type="GeneID" id="14205"/>
<dbReference type="KEGG" id="mmu:14205"/>
<dbReference type="UCSC" id="uc009uvm.1">
    <property type="organism name" value="mouse"/>
</dbReference>
<dbReference type="AGR" id="MGI:108037"/>
<dbReference type="CTD" id="2277"/>
<dbReference type="MGI" id="MGI:108037">
    <property type="gene designation" value="Vegfd"/>
</dbReference>
<dbReference type="VEuPathDB" id="HostDB:ENSMUSG00000031380"/>
<dbReference type="eggNOG" id="ENOG502QVIH">
    <property type="taxonomic scope" value="Eukaryota"/>
</dbReference>
<dbReference type="GeneTree" id="ENSGT00940000159726"/>
<dbReference type="HOGENOM" id="CLU_061712_0_0_1"/>
<dbReference type="InParanoid" id="P97946"/>
<dbReference type="OMA" id="IDMLWDN"/>
<dbReference type="OrthoDB" id="198735at2759"/>
<dbReference type="PhylomeDB" id="P97946"/>
<dbReference type="TreeFam" id="TF319554"/>
<dbReference type="Reactome" id="R-MMU-114608">
    <property type="pathway name" value="Platelet degranulation"/>
</dbReference>
<dbReference type="Reactome" id="R-MMU-194313">
    <property type="pathway name" value="VEGF ligand-receptor interactions"/>
</dbReference>
<dbReference type="Reactome" id="R-MMU-195399">
    <property type="pathway name" value="VEGF binds to VEGFR leading to receptor dimerization"/>
</dbReference>
<dbReference type="BioGRID-ORCS" id="14205">
    <property type="hits" value="3 hits in 77 CRISPR screens"/>
</dbReference>
<dbReference type="ChiTaRS" id="Vegfd">
    <property type="organism name" value="mouse"/>
</dbReference>
<dbReference type="PRO" id="PR:P97946"/>
<dbReference type="Proteomes" id="UP000000589">
    <property type="component" value="Chromosome X"/>
</dbReference>
<dbReference type="RNAct" id="P97946">
    <property type="molecule type" value="protein"/>
</dbReference>
<dbReference type="Bgee" id="ENSMUSG00000031380">
    <property type="expression patterns" value="Expressed in left lung lobe and 187 other cell types or tissues"/>
</dbReference>
<dbReference type="GO" id="GO:0005576">
    <property type="term" value="C:extracellular region"/>
    <property type="evidence" value="ECO:0000314"/>
    <property type="project" value="MGI"/>
</dbReference>
<dbReference type="GO" id="GO:0005615">
    <property type="term" value="C:extracellular space"/>
    <property type="evidence" value="ECO:0000314"/>
    <property type="project" value="MGI"/>
</dbReference>
<dbReference type="GO" id="GO:0016020">
    <property type="term" value="C:membrane"/>
    <property type="evidence" value="ECO:0007669"/>
    <property type="project" value="InterPro"/>
</dbReference>
<dbReference type="GO" id="GO:0042056">
    <property type="term" value="F:chemoattractant activity"/>
    <property type="evidence" value="ECO:0007669"/>
    <property type="project" value="Ensembl"/>
</dbReference>
<dbReference type="GO" id="GO:0008083">
    <property type="term" value="F:growth factor activity"/>
    <property type="evidence" value="ECO:0000314"/>
    <property type="project" value="MGI"/>
</dbReference>
<dbReference type="GO" id="GO:0042802">
    <property type="term" value="F:identical protein binding"/>
    <property type="evidence" value="ECO:0000353"/>
    <property type="project" value="MGI"/>
</dbReference>
<dbReference type="GO" id="GO:0043185">
    <property type="term" value="F:vascular endothelial growth factor receptor 3 binding"/>
    <property type="evidence" value="ECO:0000314"/>
    <property type="project" value="MGI"/>
</dbReference>
<dbReference type="GO" id="GO:0001525">
    <property type="term" value="P:angiogenesis"/>
    <property type="evidence" value="ECO:0007669"/>
    <property type="project" value="UniProtKB-KW"/>
</dbReference>
<dbReference type="GO" id="GO:0071542">
    <property type="term" value="P:dopaminergic neuron differentiation"/>
    <property type="evidence" value="ECO:0000314"/>
    <property type="project" value="ParkinsonsUK-UCL"/>
</dbReference>
<dbReference type="GO" id="GO:0048144">
    <property type="term" value="P:fibroblast proliferation"/>
    <property type="evidence" value="ECO:0000314"/>
    <property type="project" value="MGI"/>
</dbReference>
<dbReference type="GO" id="GO:0050930">
    <property type="term" value="P:induction of positive chemotaxis"/>
    <property type="evidence" value="ECO:0007669"/>
    <property type="project" value="Ensembl"/>
</dbReference>
<dbReference type="GO" id="GO:0051781">
    <property type="term" value="P:positive regulation of cell division"/>
    <property type="evidence" value="ECO:0007669"/>
    <property type="project" value="UniProtKB-KW"/>
</dbReference>
<dbReference type="GO" id="GO:0008284">
    <property type="term" value="P:positive regulation of cell population proliferation"/>
    <property type="evidence" value="ECO:0000314"/>
    <property type="project" value="MGI"/>
</dbReference>
<dbReference type="GO" id="GO:0060754">
    <property type="term" value="P:positive regulation of mast cell chemotaxis"/>
    <property type="evidence" value="ECO:0007669"/>
    <property type="project" value="Ensembl"/>
</dbReference>
<dbReference type="GO" id="GO:0009617">
    <property type="term" value="P:response to bacterium"/>
    <property type="evidence" value="ECO:0000270"/>
    <property type="project" value="MGI"/>
</dbReference>
<dbReference type="GO" id="GO:0048010">
    <property type="term" value="P:vascular endothelial growth factor receptor signaling pathway"/>
    <property type="evidence" value="ECO:0000316"/>
    <property type="project" value="MGI"/>
</dbReference>
<dbReference type="CDD" id="cd00135">
    <property type="entry name" value="PDGF"/>
    <property type="match status" value="1"/>
</dbReference>
<dbReference type="FunFam" id="2.10.90.10:FF:000021">
    <property type="entry name" value="vascular endothelial growth factor D"/>
    <property type="match status" value="1"/>
</dbReference>
<dbReference type="Gene3D" id="2.10.90.10">
    <property type="entry name" value="Cystine-knot cytokines"/>
    <property type="match status" value="1"/>
</dbReference>
<dbReference type="InterPro" id="IPR004153">
    <property type="entry name" value="CXCXC_repeat"/>
</dbReference>
<dbReference type="InterPro" id="IPR029034">
    <property type="entry name" value="Cystine-knot_cytokine"/>
</dbReference>
<dbReference type="InterPro" id="IPR023581">
    <property type="entry name" value="PD_growth_factor_CS"/>
</dbReference>
<dbReference type="InterPro" id="IPR000072">
    <property type="entry name" value="PDGF/VEGF_dom"/>
</dbReference>
<dbReference type="InterPro" id="IPR050507">
    <property type="entry name" value="PDGF/VEGF_growth_factor"/>
</dbReference>
<dbReference type="PANTHER" id="PTHR12025">
    <property type="entry name" value="VASCULAR ENDOTHELIAL GROWTH FACTOR"/>
    <property type="match status" value="1"/>
</dbReference>
<dbReference type="PANTHER" id="PTHR12025:SF11">
    <property type="entry name" value="VASCULAR ENDOTHELIAL GROWTH FACTOR D"/>
    <property type="match status" value="1"/>
</dbReference>
<dbReference type="Pfam" id="PF03128">
    <property type="entry name" value="CXCXC"/>
    <property type="match status" value="1"/>
</dbReference>
<dbReference type="Pfam" id="PF00341">
    <property type="entry name" value="PDGF"/>
    <property type="match status" value="1"/>
</dbReference>
<dbReference type="SMART" id="SM00141">
    <property type="entry name" value="PDGF"/>
    <property type="match status" value="1"/>
</dbReference>
<dbReference type="SUPFAM" id="SSF57501">
    <property type="entry name" value="Cystine-knot cytokines"/>
    <property type="match status" value="1"/>
</dbReference>
<dbReference type="PROSITE" id="PS00249">
    <property type="entry name" value="PDGF_1"/>
    <property type="match status" value="1"/>
</dbReference>
<dbReference type="PROSITE" id="PS50278">
    <property type="entry name" value="PDGF_2"/>
    <property type="match status" value="1"/>
</dbReference>
<protein>
    <recommendedName>
        <fullName evidence="5">Vascular endothelial growth factor D</fullName>
        <shortName>VEGF-D</shortName>
    </recommendedName>
    <alternativeName>
        <fullName>c-Fos-induced growth factor</fullName>
        <shortName>FIGF</shortName>
    </alternativeName>
</protein>
<gene>
    <name evidence="5" type="primary">Vegfd</name>
    <name type="synonym">Figf</name>
</gene>
<feature type="signal peptide" evidence="2">
    <location>
        <begin position="1"/>
        <end position="21"/>
    </location>
</feature>
<feature type="propeptide" id="PRO_0000023411" evidence="2">
    <location>
        <begin position="22"/>
        <end position="93"/>
    </location>
</feature>
<feature type="chain" id="PRO_0000023412" description="Vascular endothelial growth factor D">
    <location>
        <begin position="94"/>
        <end position="210"/>
    </location>
</feature>
<feature type="propeptide" id="PRO_0000023413" evidence="2">
    <location>
        <begin position="211"/>
        <end position="358"/>
    </location>
</feature>
<feature type="repeat" description="1; approximate">
    <location>
        <begin position="227"/>
        <end position="242"/>
    </location>
</feature>
<feature type="repeat" description="2">
    <location>
        <begin position="263"/>
        <end position="278"/>
    </location>
</feature>
<feature type="repeat" description="3">
    <location>
        <begin position="282"/>
        <end position="298"/>
    </location>
</feature>
<feature type="repeat" description="4">
    <location>
        <begin position="306"/>
        <end position="323"/>
    </location>
</feature>
<feature type="region of interest" description="4 X 16 AA repeats of C-X(10)-C-X-C-X(1,3)-C">
    <location>
        <begin position="227"/>
        <end position="323"/>
    </location>
</feature>
<feature type="glycosylation site" description="N-linked (GlcNAc...) asparagine" evidence="2">
    <location>
        <position position="160"/>
    </location>
</feature>
<feature type="glycosylation site" description="N-linked (GlcNAc...) asparagine" evidence="2">
    <location>
        <position position="190"/>
    </location>
</feature>
<feature type="glycosylation site" description="N-linked (GlcNAc...) asparagine" evidence="2">
    <location>
        <position position="292"/>
    </location>
</feature>
<feature type="disulfide bond" evidence="1">
    <location>
        <begin position="116"/>
        <end position="158"/>
    </location>
</feature>
<feature type="disulfide bond" description="Interchain" evidence="1">
    <location>
        <position position="141"/>
    </location>
</feature>
<feature type="disulfide bond" evidence="1">
    <location>
        <begin position="147"/>
        <end position="194"/>
    </location>
</feature>
<feature type="disulfide bond" description="Interchain" evidence="1">
    <location>
        <position position="150"/>
    </location>
</feature>
<feature type="disulfide bond" evidence="1">
    <location>
        <begin position="151"/>
        <end position="196"/>
    </location>
</feature>
<organism>
    <name type="scientific">Mus musculus</name>
    <name type="common">Mouse</name>
    <dbReference type="NCBI Taxonomy" id="10090"/>
    <lineage>
        <taxon>Eukaryota</taxon>
        <taxon>Metazoa</taxon>
        <taxon>Chordata</taxon>
        <taxon>Craniata</taxon>
        <taxon>Vertebrata</taxon>
        <taxon>Euteleostomi</taxon>
        <taxon>Mammalia</taxon>
        <taxon>Eutheria</taxon>
        <taxon>Euarchontoglires</taxon>
        <taxon>Glires</taxon>
        <taxon>Rodentia</taxon>
        <taxon>Myomorpha</taxon>
        <taxon>Muroidea</taxon>
        <taxon>Muridae</taxon>
        <taxon>Murinae</taxon>
        <taxon>Mus</taxon>
        <taxon>Mus</taxon>
    </lineage>
</organism>
<name>VEGFD_MOUSE</name>
<accession>P97946</accession>
<accession>A2AIH3</accession>
<sequence length="358" mass="40909">MYGEWGMGNILMMFHVYLVQGFRSEHGPVKDFSFERSSRSMLERSEQQIRAASSLEELLQIAHSEDWKLWRCRLKLKSLASMDSRSASHRSTRFAATFYDTETLKVIDEEWQRTQCSPRETCVEVASELGKTTNTFFKPPCVNVFRCGGCCNEEGVMCMNTSTSYISKQLFEISVPLTSVPELVPVKIANHTGCKCLPTGPRHPYSIIRRSIQTPEEDECPHSKKLCPIDMLWDNTKCKCVLQDETPLPGTEDHSYLQEPTLCGPHMTFDEDRCECVCKAPCPGDLIQHPENCSCFECKESLESCCQKHKIFHPDTCSCEDRCPFHTRTCASRKPACGKHWRFPKETRAQGLYSQENP</sequence>
<proteinExistence type="evidence at transcript level"/>
<evidence type="ECO:0000250" key="1"/>
<evidence type="ECO:0000255" key="2"/>
<evidence type="ECO:0000269" key="3">
    <source>
    </source>
</evidence>
<evidence type="ECO:0000305" key="4"/>
<evidence type="ECO:0000312" key="5">
    <source>
        <dbReference type="MGI" id="MGI:108037"/>
    </source>
</evidence>
<keyword id="KW-0037">Angiogenesis</keyword>
<keyword id="KW-0165">Cleavage on pair of basic residues</keyword>
<keyword id="KW-0217">Developmental protein</keyword>
<keyword id="KW-0221">Differentiation</keyword>
<keyword id="KW-1015">Disulfide bond</keyword>
<keyword id="KW-0325">Glycoprotein</keyword>
<keyword id="KW-0339">Growth factor</keyword>
<keyword id="KW-0497">Mitogen</keyword>
<keyword id="KW-1185">Reference proteome</keyword>
<keyword id="KW-0677">Repeat</keyword>
<keyword id="KW-0964">Secreted</keyword>
<keyword id="KW-0732">Signal</keyword>
<comment type="function">
    <text>Growth factor active in angiogenesis, lymphangiogenesis and endothelial cell growth, stimulating their proliferation and migration and also has effects on the permeability of blood vessels. May function in the formation of the venous and lymphatic vascular systems during embryogenesis, and also in the maintenance of differentiated lymphatic endothelium in adults. Binds and activates VEGFR-3 (Flt4) receptor.</text>
</comment>
<comment type="subunit">
    <text>Homodimer; non-covalent and antiparallel.</text>
</comment>
<comment type="subcellular location">
    <subcellularLocation>
        <location>Secreted</location>
    </subcellularLocation>
</comment>
<comment type="tissue specificity">
    <text>Highly expressed in fetal and adult lung.</text>
</comment>
<comment type="developmental stage">
    <text evidence="3">Expressed in a dynamic pattern in several body structures and organs of the embryo such as limb buds, acoustic ganglion, teeth, heart, anterior pituitary as well as lung and kidney mesenchyme, liver, derma, and periosteum of the vertebral column.</text>
</comment>
<comment type="induction">
    <text>By the transcription factor c-fos.</text>
</comment>
<comment type="PTM">
    <text evidence="1">Undergoes a complex proteolytic maturation which generates a variety of processed secreted forms with increased activity toward VEGFR-3 and VEGFR-2. VEGF-D first form an antiparallel homodimer linked by disulfide bonds before secretion. The fully processed VEGF-D is composed mostly of two VEGF homology domains (VHDs) bound by non-covalent interactions (By similarity).</text>
</comment>
<comment type="similarity">
    <text evidence="4">Belongs to the PDGF/VEGF growth factor family.</text>
</comment>
<reference key="1">
    <citation type="journal article" date="1996" name="Proc. Natl. Acad. Sci. U.S.A.">
        <title>Identification of a c-fos-induced gene that is related to the platelet-derived growth factor/vascular endothelial growth factor family.</title>
        <authorList>
            <person name="Orlandini M."/>
            <person name="Marconcini L."/>
            <person name="Ferruzzi R."/>
            <person name="Oliviero S."/>
        </authorList>
    </citation>
    <scope>NUCLEOTIDE SEQUENCE [MRNA]</scope>
    <source>
        <strain>C57BL/6J</strain>
        <tissue>Fibroblast</tissue>
    </source>
</reference>
<reference key="2">
    <citation type="journal article" date="1997" name="Genomics">
        <title>Molecular cloning of a novel vascular endothelial growth factor, VEGF-D.</title>
        <authorList>
            <person name="Yamada Y."/>
            <person name="Nezu J."/>
            <person name="Shimane M."/>
            <person name="Hirata Y."/>
        </authorList>
    </citation>
    <scope>NUCLEOTIDE SEQUENCE [MRNA]</scope>
    <source>
        <tissue>Lung</tissue>
    </source>
</reference>
<reference key="3">
    <citation type="journal article" date="2009" name="PLoS Biol.">
        <title>Lineage-specific biology revealed by a finished genome assembly of the mouse.</title>
        <authorList>
            <person name="Church D.M."/>
            <person name="Goodstadt L."/>
            <person name="Hillier L.W."/>
            <person name="Zody M.C."/>
            <person name="Goldstein S."/>
            <person name="She X."/>
            <person name="Bult C.J."/>
            <person name="Agarwala R."/>
            <person name="Cherry J.L."/>
            <person name="DiCuccio M."/>
            <person name="Hlavina W."/>
            <person name="Kapustin Y."/>
            <person name="Meric P."/>
            <person name="Maglott D."/>
            <person name="Birtle Z."/>
            <person name="Marques A.C."/>
            <person name="Graves T."/>
            <person name="Zhou S."/>
            <person name="Teague B."/>
            <person name="Potamousis K."/>
            <person name="Churas C."/>
            <person name="Place M."/>
            <person name="Herschleb J."/>
            <person name="Runnheim R."/>
            <person name="Forrest D."/>
            <person name="Amos-Landgraf J."/>
            <person name="Schwartz D.C."/>
            <person name="Cheng Z."/>
            <person name="Lindblad-Toh K."/>
            <person name="Eichler E.E."/>
            <person name="Ponting C.P."/>
        </authorList>
    </citation>
    <scope>NUCLEOTIDE SEQUENCE [LARGE SCALE GENOMIC DNA]</scope>
    <source>
        <strain>C57BL/6J</strain>
    </source>
</reference>
<reference key="4">
    <citation type="journal article" date="2004" name="Genome Res.">
        <title>The status, quality, and expansion of the NIH full-length cDNA project: the Mammalian Gene Collection (MGC).</title>
        <authorList>
            <consortium name="The MGC Project Team"/>
        </authorList>
    </citation>
    <scope>NUCLEOTIDE SEQUENCE [LARGE SCALE MRNA]</scope>
    <source>
        <tissue>Bone</tissue>
        <tissue>Limb</tissue>
    </source>
</reference>
<reference key="5">
    <citation type="journal article" date="1998" name="Mech. Dev.">
        <title>Embryonic expression pattern of the murine figf gene, a growth factor belonging to platelet-derived growth factor/vascular endothelial growth factor family.</title>
        <authorList>
            <person name="Avantaggiato V."/>
            <person name="Orlandini M."/>
            <person name="Acampora D."/>
            <person name="Oliviero S."/>
            <person name="Simeone A."/>
        </authorList>
    </citation>
    <scope>DEVELOPMENTAL STAGE</scope>
</reference>
<reference key="6">
    <citation type="journal article" date="2001" name="J. Biol. Chem.">
        <title>The specificity of receptor binding by vascular endothelial growth factor-d is different in mouse and man.</title>
        <authorList>
            <person name="Baldwin M.E."/>
            <person name="Catimel B."/>
            <person name="Nice E.C."/>
            <person name="Roufail S."/>
            <person name="Hall N.E."/>
            <person name="Stenvers K.L."/>
            <person name="Karkkainen M.J."/>
            <person name="Alitalo K."/>
            <person name="Stacker S.A."/>
            <person name="Achen M.G."/>
        </authorList>
    </citation>
    <scope>RECEPTOR SPECIFICITY</scope>
</reference>